<keyword id="KW-0025">Alternative splicing</keyword>
<keyword id="KW-1185">Reference proteome</keyword>
<keyword id="KW-0677">Repeat</keyword>
<keyword id="KW-0346">Stress response</keyword>
<accession>Q9ZV19</accession>
<accession>Q8S8L7</accession>
<feature type="chain" id="PRO_0000424707" description="DJ-1 protein homolog E">
    <location>
        <begin position="1"/>
        <end position="398"/>
    </location>
</feature>
<feature type="domain" description="PfpI endopeptidase 1">
    <location>
        <begin position="7"/>
        <end position="199"/>
    </location>
</feature>
<feature type="domain" description="PfpI endopeptidase 2">
    <location>
        <begin position="210"/>
        <end position="393"/>
    </location>
</feature>
<feature type="splice variant" id="VSP_053484" description="In isoform 2." evidence="3">
    <location>
        <begin position="61"/>
        <end position="69"/>
    </location>
</feature>
<sequence>MASAVQKSALLLCGDYMEAYETIVPLYVLQSFGVSVHCVSPNRNAGDRCVMSAHDFLGLELYTELVVDQLTLNANFDDVTPENYDVIIIPGGRFTELLSADEKCVDLVARFAESKKLIFTSCHSQVMLMAAGILAGGVKCTAFESIKPLIELSGGEWWQQPGIQSMFEITDCVKDGNFMSTVGWPTLGHGIKLLLESLGGKVCSLEKKQASVLFLIGDYVEDYGINVPFRALQALGCKVDAVTPNKKKGEVCATAVYDLEDGRQIPAEKRGHNFFVTASWDDICVDDYDCVVVPGGRSPELLVMNEKAVALVKSFAEKDKVFAAIGQGKLLLAATGVLKGKRCASGKGMKVMVKVAGGEAVMEKGCVTDGKVVTAASATDLPAFLFDLSTALGLTVMF</sequence>
<gene>
    <name type="primary">DJ1E</name>
    <name type="synonym">YLS5</name>
    <name type="ordered locus">At2g38860</name>
    <name type="ORF">T7F6.3</name>
</gene>
<dbReference type="EMBL" id="AB047808">
    <property type="protein sequence ID" value="BAB32885.1"/>
    <property type="molecule type" value="mRNA"/>
</dbReference>
<dbReference type="EMBL" id="AC005770">
    <property type="protein sequence ID" value="AAC79625.2"/>
    <property type="molecule type" value="Genomic_DNA"/>
</dbReference>
<dbReference type="EMBL" id="CP002685">
    <property type="protein sequence ID" value="AEC09594.1"/>
    <property type="molecule type" value="Genomic_DNA"/>
</dbReference>
<dbReference type="EMBL" id="CP002685">
    <property type="protein sequence ID" value="AEC09595.1"/>
    <property type="molecule type" value="Genomic_DNA"/>
</dbReference>
<dbReference type="EMBL" id="AY048272">
    <property type="protein sequence ID" value="AAK82534.1"/>
    <property type="molecule type" value="mRNA"/>
</dbReference>
<dbReference type="EMBL" id="AY090381">
    <property type="protein sequence ID" value="AAL91283.1"/>
    <property type="molecule type" value="mRNA"/>
</dbReference>
<dbReference type="EMBL" id="AY084644">
    <property type="protein sequence ID" value="AAM61207.1"/>
    <property type="molecule type" value="mRNA"/>
</dbReference>
<dbReference type="PIR" id="C84810">
    <property type="entry name" value="C84810"/>
</dbReference>
<dbReference type="RefSeq" id="NP_030434.1">
    <molecule id="Q9ZV19-2"/>
    <property type="nucleotide sequence ID" value="NM_129443.2"/>
</dbReference>
<dbReference type="RefSeq" id="NP_850303.1">
    <molecule id="Q9ZV19-1"/>
    <property type="nucleotide sequence ID" value="NM_179972.3"/>
</dbReference>
<dbReference type="SMR" id="Q9ZV19"/>
<dbReference type="BioGRID" id="3810">
    <property type="interactions" value="1"/>
</dbReference>
<dbReference type="FunCoup" id="Q9ZV19">
    <property type="interactions" value="382"/>
</dbReference>
<dbReference type="IntAct" id="Q9ZV19">
    <property type="interactions" value="1"/>
</dbReference>
<dbReference type="STRING" id="3702.Q9ZV19"/>
<dbReference type="MEROPS" id="C56.A01"/>
<dbReference type="SwissPalm" id="Q9ZV19"/>
<dbReference type="PaxDb" id="3702-AT2G38860.2"/>
<dbReference type="ProteomicsDB" id="224163">
    <molecule id="Q9ZV19-1"/>
</dbReference>
<dbReference type="EnsemblPlants" id="AT2G38860.1">
    <molecule id="Q9ZV19-2"/>
    <property type="protein sequence ID" value="AT2G38860.1"/>
    <property type="gene ID" value="AT2G38860"/>
</dbReference>
<dbReference type="EnsemblPlants" id="AT2G38860.2">
    <molecule id="Q9ZV19-1"/>
    <property type="protein sequence ID" value="AT2G38860.2"/>
    <property type="gene ID" value="AT2G38860"/>
</dbReference>
<dbReference type="GeneID" id="818470"/>
<dbReference type="Gramene" id="AT2G38860.1">
    <molecule id="Q9ZV19-2"/>
    <property type="protein sequence ID" value="AT2G38860.1"/>
    <property type="gene ID" value="AT2G38860"/>
</dbReference>
<dbReference type="Gramene" id="AT2G38860.2">
    <molecule id="Q9ZV19-1"/>
    <property type="protein sequence ID" value="AT2G38860.2"/>
    <property type="gene ID" value="AT2G38860"/>
</dbReference>
<dbReference type="KEGG" id="ath:AT2G38860"/>
<dbReference type="Araport" id="AT2G38860"/>
<dbReference type="TAIR" id="AT2G38860">
    <property type="gene designation" value="YLS5"/>
</dbReference>
<dbReference type="eggNOG" id="KOG2764">
    <property type="taxonomic scope" value="Eukaryota"/>
</dbReference>
<dbReference type="InParanoid" id="Q9ZV19"/>
<dbReference type="OrthoDB" id="543156at2759"/>
<dbReference type="PhylomeDB" id="Q9ZV19"/>
<dbReference type="BRENDA" id="4.2.1.130">
    <property type="organism ID" value="399"/>
</dbReference>
<dbReference type="PRO" id="PR:Q9ZV19"/>
<dbReference type="Proteomes" id="UP000006548">
    <property type="component" value="Chromosome 2"/>
</dbReference>
<dbReference type="ExpressionAtlas" id="Q9ZV19">
    <property type="expression patterns" value="baseline and differential"/>
</dbReference>
<dbReference type="GO" id="GO:0005794">
    <property type="term" value="C:Golgi apparatus"/>
    <property type="evidence" value="ECO:0007005"/>
    <property type="project" value="TAIR"/>
</dbReference>
<dbReference type="CDD" id="cd03169">
    <property type="entry name" value="GATase1_PfpI_1"/>
    <property type="match status" value="2"/>
</dbReference>
<dbReference type="Gene3D" id="3.40.50.880">
    <property type="match status" value="2"/>
</dbReference>
<dbReference type="InterPro" id="IPR006286">
    <property type="entry name" value="C56_PfpI-like"/>
</dbReference>
<dbReference type="InterPro" id="IPR029062">
    <property type="entry name" value="Class_I_gatase-like"/>
</dbReference>
<dbReference type="InterPro" id="IPR002818">
    <property type="entry name" value="DJ-1/PfpI"/>
</dbReference>
<dbReference type="PANTHER" id="PTHR42733">
    <property type="entry name" value="DJ-1 PROTEIN"/>
    <property type="match status" value="1"/>
</dbReference>
<dbReference type="PANTHER" id="PTHR42733:SF9">
    <property type="entry name" value="DJ-1 PROTEIN HOMOLOG E"/>
    <property type="match status" value="1"/>
</dbReference>
<dbReference type="Pfam" id="PF01965">
    <property type="entry name" value="DJ-1_PfpI"/>
    <property type="match status" value="2"/>
</dbReference>
<dbReference type="SUPFAM" id="SSF52317">
    <property type="entry name" value="Class I glutamine amidotransferase-like"/>
    <property type="match status" value="2"/>
</dbReference>
<comment type="function">
    <text evidence="1">May be involved in oxidative stress response.</text>
</comment>
<comment type="subunit">
    <text evidence="5">Homotrimer.</text>
</comment>
<comment type="alternative products">
    <event type="alternative splicing"/>
    <isoform>
        <id>Q9ZV19-1</id>
        <name>1</name>
        <sequence type="displayed"/>
    </isoform>
    <isoform>
        <id>Q9ZV19-2</id>
        <name>2</name>
        <sequence type="described" ref="VSP_053484"/>
    </isoform>
</comment>
<comment type="tissue specificity">
    <text evidence="2">Expressed in roots and cauline leaves.</text>
</comment>
<comment type="developmental stage">
    <text evidence="2">Up-regulated in leaves during natural senescence.</text>
</comment>
<comment type="induction">
    <text evidence="2">By ethylene, abscisic acid (ABA) and dark.</text>
</comment>
<comment type="similarity">
    <text evidence="4">Belongs to the peptidase C56 family.</text>
</comment>
<protein>
    <recommendedName>
        <fullName>DJ-1 protein homolog E</fullName>
        <shortName>AtDJ-1E</shortName>
    </recommendedName>
    <alternativeName>
        <fullName>Protein YELLOW-LEAF-SPECIFIC GENE 5</fullName>
    </alternativeName>
</protein>
<reference key="1">
    <citation type="journal article" date="2001" name="Plant Cell Physiol.">
        <title>Isolation and RNA gel blot analysis of genes that could serve as potential molecular markers for leaf senescence in Arabidopsis thaliana.</title>
        <authorList>
            <person name="Yoshida S."/>
            <person name="Ito M."/>
            <person name="Nishida I."/>
            <person name="Watanabe A."/>
        </authorList>
    </citation>
    <scope>NUCLEOTIDE SEQUENCE [MRNA] (ISOFORM 1)</scope>
    <scope>TISSUE SPECIFICITY</scope>
    <scope>DEVELOPMENTAL STAGE</scope>
    <scope>INDUCTION</scope>
</reference>
<reference key="2">
    <citation type="journal article" date="1999" name="Nature">
        <title>Sequence and analysis of chromosome 2 of the plant Arabidopsis thaliana.</title>
        <authorList>
            <person name="Lin X."/>
            <person name="Kaul S."/>
            <person name="Rounsley S.D."/>
            <person name="Shea T.P."/>
            <person name="Benito M.-I."/>
            <person name="Town C.D."/>
            <person name="Fujii C.Y."/>
            <person name="Mason T.M."/>
            <person name="Bowman C.L."/>
            <person name="Barnstead M.E."/>
            <person name="Feldblyum T.V."/>
            <person name="Buell C.R."/>
            <person name="Ketchum K.A."/>
            <person name="Lee J.J."/>
            <person name="Ronning C.M."/>
            <person name="Koo H.L."/>
            <person name="Moffat K.S."/>
            <person name="Cronin L.A."/>
            <person name="Shen M."/>
            <person name="Pai G."/>
            <person name="Van Aken S."/>
            <person name="Umayam L."/>
            <person name="Tallon L.J."/>
            <person name="Gill J.E."/>
            <person name="Adams M.D."/>
            <person name="Carrera A.J."/>
            <person name="Creasy T.H."/>
            <person name="Goodman H.M."/>
            <person name="Somerville C.R."/>
            <person name="Copenhaver G.P."/>
            <person name="Preuss D."/>
            <person name="Nierman W.C."/>
            <person name="White O."/>
            <person name="Eisen J.A."/>
            <person name="Salzberg S.L."/>
            <person name="Fraser C.M."/>
            <person name="Venter J.C."/>
        </authorList>
    </citation>
    <scope>NUCLEOTIDE SEQUENCE [LARGE SCALE GENOMIC DNA]</scope>
    <source>
        <strain>cv. Columbia</strain>
    </source>
</reference>
<reference key="3">
    <citation type="journal article" date="2017" name="Plant J.">
        <title>Araport11: a complete reannotation of the Arabidopsis thaliana reference genome.</title>
        <authorList>
            <person name="Cheng C.Y."/>
            <person name="Krishnakumar V."/>
            <person name="Chan A.P."/>
            <person name="Thibaud-Nissen F."/>
            <person name="Schobel S."/>
            <person name="Town C.D."/>
        </authorList>
    </citation>
    <scope>GENOME REANNOTATION</scope>
    <source>
        <strain>cv. Columbia</strain>
    </source>
</reference>
<reference key="4">
    <citation type="journal article" date="2003" name="Science">
        <title>Empirical analysis of transcriptional activity in the Arabidopsis genome.</title>
        <authorList>
            <person name="Yamada K."/>
            <person name="Lim J."/>
            <person name="Dale J.M."/>
            <person name="Chen H."/>
            <person name="Shinn P."/>
            <person name="Palm C.J."/>
            <person name="Southwick A.M."/>
            <person name="Wu H.C."/>
            <person name="Kim C.J."/>
            <person name="Nguyen M."/>
            <person name="Pham P.K."/>
            <person name="Cheuk R.F."/>
            <person name="Karlin-Newmann G."/>
            <person name="Liu S.X."/>
            <person name="Lam B."/>
            <person name="Sakano H."/>
            <person name="Wu T."/>
            <person name="Yu G."/>
            <person name="Miranda M."/>
            <person name="Quach H.L."/>
            <person name="Tripp M."/>
            <person name="Chang C.H."/>
            <person name="Lee J.M."/>
            <person name="Toriumi M.J."/>
            <person name="Chan M.M."/>
            <person name="Tang C.C."/>
            <person name="Onodera C.S."/>
            <person name="Deng J.M."/>
            <person name="Akiyama K."/>
            <person name="Ansari Y."/>
            <person name="Arakawa T."/>
            <person name="Banh J."/>
            <person name="Banno F."/>
            <person name="Bowser L."/>
            <person name="Brooks S.Y."/>
            <person name="Carninci P."/>
            <person name="Chao Q."/>
            <person name="Choy N."/>
            <person name="Enju A."/>
            <person name="Goldsmith A.D."/>
            <person name="Gurjal M."/>
            <person name="Hansen N.F."/>
            <person name="Hayashizaki Y."/>
            <person name="Johnson-Hopson C."/>
            <person name="Hsuan V.W."/>
            <person name="Iida K."/>
            <person name="Karnes M."/>
            <person name="Khan S."/>
            <person name="Koesema E."/>
            <person name="Ishida J."/>
            <person name="Jiang P.X."/>
            <person name="Jones T."/>
            <person name="Kawai J."/>
            <person name="Kamiya A."/>
            <person name="Meyers C."/>
            <person name="Nakajima M."/>
            <person name="Narusaka M."/>
            <person name="Seki M."/>
            <person name="Sakurai T."/>
            <person name="Satou M."/>
            <person name="Tamse R."/>
            <person name="Vaysberg M."/>
            <person name="Wallender E.K."/>
            <person name="Wong C."/>
            <person name="Yamamura Y."/>
            <person name="Yuan S."/>
            <person name="Shinozaki K."/>
            <person name="Davis R.W."/>
            <person name="Theologis A."/>
            <person name="Ecker J.R."/>
        </authorList>
    </citation>
    <scope>NUCLEOTIDE SEQUENCE [LARGE SCALE MRNA] (ISOFORM 1)</scope>
    <source>
        <strain>cv. Columbia</strain>
    </source>
</reference>
<reference key="5">
    <citation type="submission" date="2002-03" db="EMBL/GenBank/DDBJ databases">
        <title>Full-length cDNA from Arabidopsis thaliana.</title>
        <authorList>
            <person name="Brover V.V."/>
            <person name="Troukhan M.E."/>
            <person name="Alexandrov N.A."/>
            <person name="Lu Y.-P."/>
            <person name="Flavell R.B."/>
            <person name="Feldmann K.A."/>
        </authorList>
    </citation>
    <scope>NUCLEOTIDE SEQUENCE [LARGE SCALE MRNA] (ISOFORM 2)</scope>
    <source>
        <strain>cv. Columbia</strain>
    </source>
</reference>
<reference key="6">
    <citation type="journal article" date="2013" name="FEBS J.">
        <title>Novel glyoxalases from Arabidopsis thaliana.</title>
        <authorList>
            <person name="Kwon K."/>
            <person name="Choi D."/>
            <person name="Hyun J.K."/>
            <person name="Jung H.S."/>
            <person name="Baek K."/>
            <person name="Park C."/>
        </authorList>
    </citation>
    <scope>SUBUNIT</scope>
</reference>
<proteinExistence type="evidence at protein level"/>
<evidence type="ECO:0000250" key="1"/>
<evidence type="ECO:0000269" key="2">
    <source>
    </source>
</evidence>
<evidence type="ECO:0000303" key="3">
    <source ref="5"/>
</evidence>
<evidence type="ECO:0000305" key="4"/>
<evidence type="ECO:0000305" key="5">
    <source>
    </source>
</evidence>
<organism>
    <name type="scientific">Arabidopsis thaliana</name>
    <name type="common">Mouse-ear cress</name>
    <dbReference type="NCBI Taxonomy" id="3702"/>
    <lineage>
        <taxon>Eukaryota</taxon>
        <taxon>Viridiplantae</taxon>
        <taxon>Streptophyta</taxon>
        <taxon>Embryophyta</taxon>
        <taxon>Tracheophyta</taxon>
        <taxon>Spermatophyta</taxon>
        <taxon>Magnoliopsida</taxon>
        <taxon>eudicotyledons</taxon>
        <taxon>Gunneridae</taxon>
        <taxon>Pentapetalae</taxon>
        <taxon>rosids</taxon>
        <taxon>malvids</taxon>
        <taxon>Brassicales</taxon>
        <taxon>Brassicaceae</taxon>
        <taxon>Camelineae</taxon>
        <taxon>Arabidopsis</taxon>
    </lineage>
</organism>
<name>DJ1E_ARATH</name>